<gene>
    <name type="primary">cobS</name>
    <name type="ordered locus">MT2264</name>
</gene>
<accession>P9WP90</accession>
<accession>L0T954</accession>
<accession>Q10397</accession>
<protein>
    <recommendedName>
        <fullName>Adenosylcobinamide-GDP ribazoletransferase</fullName>
        <ecNumber>2.7.8.26</ecNumber>
    </recommendedName>
    <alternativeName>
        <fullName>Cobalamin synthase</fullName>
    </alternativeName>
    <alternativeName>
        <fullName>Cobalamin-5'-phosphate synthase</fullName>
    </alternativeName>
</protein>
<organism>
    <name type="scientific">Mycobacterium tuberculosis (strain CDC 1551 / Oshkosh)</name>
    <dbReference type="NCBI Taxonomy" id="83331"/>
    <lineage>
        <taxon>Bacteria</taxon>
        <taxon>Bacillati</taxon>
        <taxon>Actinomycetota</taxon>
        <taxon>Actinomycetes</taxon>
        <taxon>Mycobacteriales</taxon>
        <taxon>Mycobacteriaceae</taxon>
        <taxon>Mycobacterium</taxon>
        <taxon>Mycobacterium tuberculosis complex</taxon>
    </lineage>
</organism>
<comment type="function">
    <text evidence="1">Joins adenosylcobinamide-GDP and alpha-ribazole to generate adenosylcobalamin (Ado-cobalamin). Also synthesizes adenosylcobalamin 5'-phosphate from adenosylcobinamide-GDP and alpha-ribazole 5'-phosphate (By similarity).</text>
</comment>
<comment type="catalytic activity">
    <reaction>
        <text>alpha-ribazole + adenosylcob(III)inamide-GDP = adenosylcob(III)alamin + GMP + H(+)</text>
        <dbReference type="Rhea" id="RHEA:16049"/>
        <dbReference type="ChEBI" id="CHEBI:10329"/>
        <dbReference type="ChEBI" id="CHEBI:15378"/>
        <dbReference type="ChEBI" id="CHEBI:18408"/>
        <dbReference type="ChEBI" id="CHEBI:58115"/>
        <dbReference type="ChEBI" id="CHEBI:60487"/>
        <dbReference type="EC" id="2.7.8.26"/>
    </reaction>
</comment>
<comment type="catalytic activity">
    <reaction>
        <text>alpha-ribazole 5'-phosphate + adenosylcob(III)inamide-GDP = adenosylcob(III)alamin 5'-phosphate + GMP + H(+)</text>
        <dbReference type="Rhea" id="RHEA:23560"/>
        <dbReference type="ChEBI" id="CHEBI:15378"/>
        <dbReference type="ChEBI" id="CHEBI:57918"/>
        <dbReference type="ChEBI" id="CHEBI:58115"/>
        <dbReference type="ChEBI" id="CHEBI:60487"/>
        <dbReference type="ChEBI" id="CHEBI:60493"/>
        <dbReference type="EC" id="2.7.8.26"/>
    </reaction>
</comment>
<comment type="cofactor">
    <cofactor evidence="1">
        <name>Mg(2+)</name>
        <dbReference type="ChEBI" id="CHEBI:18420"/>
    </cofactor>
</comment>
<comment type="pathway">
    <text>Cofactor biosynthesis; adenosylcobalamin biosynthesis; adenosylcobalamin from cob(II)yrinate a,c-diamide: step 7/7.</text>
</comment>
<comment type="subcellular location">
    <subcellularLocation>
        <location evidence="1">Cell membrane</location>
        <topology evidence="1">Multi-pass membrane protein</topology>
    </subcellularLocation>
</comment>
<comment type="similarity">
    <text evidence="3">Belongs to the CobS family.</text>
</comment>
<feature type="chain" id="PRO_0000426993" description="Adenosylcobinamide-GDP ribazoletransferase">
    <location>
        <begin position="1"/>
        <end position="249"/>
    </location>
</feature>
<feature type="transmembrane region" description="Helical" evidence="2">
    <location>
        <begin position="32"/>
        <end position="52"/>
    </location>
</feature>
<feature type="transmembrane region" description="Helical" evidence="2">
    <location>
        <begin position="109"/>
        <end position="129"/>
    </location>
</feature>
<feature type="transmembrane region" description="Helical" evidence="2">
    <location>
        <begin position="132"/>
        <end position="152"/>
    </location>
</feature>
<feature type="transmembrane region" description="Helical" evidence="2">
    <location>
        <begin position="173"/>
        <end position="193"/>
    </location>
</feature>
<feature type="transmembrane region" description="Helical" evidence="2">
    <location>
        <begin position="198"/>
        <end position="218"/>
    </location>
</feature>
<reference key="1">
    <citation type="journal article" date="2002" name="J. Bacteriol.">
        <title>Whole-genome comparison of Mycobacterium tuberculosis clinical and laboratory strains.</title>
        <authorList>
            <person name="Fleischmann R.D."/>
            <person name="Alland D."/>
            <person name="Eisen J.A."/>
            <person name="Carpenter L."/>
            <person name="White O."/>
            <person name="Peterson J.D."/>
            <person name="DeBoy R.T."/>
            <person name="Dodson R.J."/>
            <person name="Gwinn M.L."/>
            <person name="Haft D.H."/>
            <person name="Hickey E.K."/>
            <person name="Kolonay J.F."/>
            <person name="Nelson W.C."/>
            <person name="Umayam L.A."/>
            <person name="Ermolaeva M.D."/>
            <person name="Salzberg S.L."/>
            <person name="Delcher A."/>
            <person name="Utterback T.R."/>
            <person name="Weidman J.F."/>
            <person name="Khouri H.M."/>
            <person name="Gill J."/>
            <person name="Mikula A."/>
            <person name="Bishai W."/>
            <person name="Jacobs W.R. Jr."/>
            <person name="Venter J.C."/>
            <person name="Fraser C.M."/>
        </authorList>
    </citation>
    <scope>NUCLEOTIDE SEQUENCE [LARGE SCALE GENOMIC DNA]</scope>
    <source>
        <strain>CDC 1551 / Oshkosh</strain>
    </source>
</reference>
<keyword id="KW-1003">Cell membrane</keyword>
<keyword id="KW-0169">Cobalamin biosynthesis</keyword>
<keyword id="KW-0460">Magnesium</keyword>
<keyword id="KW-0472">Membrane</keyword>
<keyword id="KW-1185">Reference proteome</keyword>
<keyword id="KW-0808">Transferase</keyword>
<keyword id="KW-0812">Transmembrane</keyword>
<keyword id="KW-1133">Transmembrane helix</keyword>
<name>COBS_MYCTO</name>
<evidence type="ECO:0000250" key="1"/>
<evidence type="ECO:0000255" key="2"/>
<evidence type="ECO:0000305" key="3"/>
<proteinExistence type="inferred from homology"/>
<sequence>MMRSLATAFAFATVIPTPGSATTPMGRGPMTALPVVGAALGALAAAIAWAGAQVFGPSSPLSGMLTVAVLLVVTRGLHIDGVADTADGLGCYGPPQRALAVMRDGSTGPFGVAAVVLVIALQGLAFATLTTVGIAGITLAVLSGRVTAVLVCRRLVPAAHGSTLGSRVAGTQPAPVVAAWLAVLLAVSVPAGPRPWQGPIAVLVAVTAGAALAAHCVHRFGGVTGDVLGSAIELSTTVSAVTLAGLARL</sequence>
<dbReference type="EC" id="2.7.8.26"/>
<dbReference type="EMBL" id="AE000516">
    <property type="protein sequence ID" value="AAK46550.1"/>
    <property type="molecule type" value="Genomic_DNA"/>
</dbReference>
<dbReference type="PIR" id="A70786">
    <property type="entry name" value="A70786"/>
</dbReference>
<dbReference type="RefSeq" id="WP_003899217.1">
    <property type="nucleotide sequence ID" value="NZ_KK341227.1"/>
</dbReference>
<dbReference type="KEGG" id="mtc:MT2264"/>
<dbReference type="PATRIC" id="fig|83331.31.peg.2439"/>
<dbReference type="HOGENOM" id="CLU_057426_0_2_11"/>
<dbReference type="UniPathway" id="UPA00148">
    <property type="reaction ID" value="UER00238"/>
</dbReference>
<dbReference type="Proteomes" id="UP000001020">
    <property type="component" value="Chromosome"/>
</dbReference>
<dbReference type="GO" id="GO:0005886">
    <property type="term" value="C:plasma membrane"/>
    <property type="evidence" value="ECO:0007669"/>
    <property type="project" value="UniProtKB-SubCell"/>
</dbReference>
<dbReference type="GO" id="GO:0051073">
    <property type="term" value="F:adenosylcobinamide-GDP ribazoletransferase activity"/>
    <property type="evidence" value="ECO:0007669"/>
    <property type="project" value="UniProtKB-UniRule"/>
</dbReference>
<dbReference type="GO" id="GO:0008818">
    <property type="term" value="F:cobalamin 5'-phosphate synthase activity"/>
    <property type="evidence" value="ECO:0007669"/>
    <property type="project" value="UniProtKB-UniRule"/>
</dbReference>
<dbReference type="GO" id="GO:0009236">
    <property type="term" value="P:cobalamin biosynthetic process"/>
    <property type="evidence" value="ECO:0007669"/>
    <property type="project" value="UniProtKB-UniRule"/>
</dbReference>
<dbReference type="HAMAP" id="MF_00719">
    <property type="entry name" value="CobS"/>
    <property type="match status" value="1"/>
</dbReference>
<dbReference type="InterPro" id="IPR003805">
    <property type="entry name" value="CobS"/>
</dbReference>
<dbReference type="NCBIfam" id="NF001279">
    <property type="entry name" value="PRK00235.2-1"/>
    <property type="match status" value="1"/>
</dbReference>
<dbReference type="PANTHER" id="PTHR34148">
    <property type="entry name" value="ADENOSYLCOBINAMIDE-GDP RIBAZOLETRANSFERASE"/>
    <property type="match status" value="1"/>
</dbReference>
<dbReference type="PANTHER" id="PTHR34148:SF1">
    <property type="entry name" value="ADENOSYLCOBINAMIDE-GDP RIBAZOLETRANSFERASE"/>
    <property type="match status" value="1"/>
</dbReference>
<dbReference type="Pfam" id="PF02654">
    <property type="entry name" value="CobS"/>
    <property type="match status" value="1"/>
</dbReference>